<feature type="signal peptide" evidence="1">
    <location>
        <begin position="1"/>
        <end position="19"/>
    </location>
</feature>
<feature type="chain" id="PRO_0000265773" description="Prokineticin Bm8-b">
    <location>
        <begin position="20"/>
        <end position="96"/>
    </location>
</feature>
<feature type="disulfide bond" evidence="1">
    <location>
        <begin position="32"/>
        <end position="50"/>
    </location>
</feature>
<feature type="disulfide bond" evidence="1">
    <location>
        <begin position="37"/>
        <end position="78"/>
    </location>
</feature>
<feature type="disulfide bond" evidence="1">
    <location>
        <begin position="60"/>
        <end position="86"/>
    </location>
</feature>
<feature type="disulfide bond" evidence="1">
    <location>
        <begin position="80"/>
        <end position="95"/>
    </location>
</feature>
<protein>
    <recommendedName>
        <fullName>Prokineticin Bm8-b</fullName>
    </recommendedName>
</protein>
<dbReference type="EMBL" id="AJ440231">
    <property type="protein sequence ID" value="CAD29341.1"/>
    <property type="molecule type" value="mRNA"/>
</dbReference>
<dbReference type="SMR" id="Q8JFY2"/>
<dbReference type="GO" id="GO:0005576">
    <property type="term" value="C:extracellular region"/>
    <property type="evidence" value="ECO:0007669"/>
    <property type="project" value="UniProtKB-SubCell"/>
</dbReference>
<dbReference type="GO" id="GO:0090729">
    <property type="term" value="F:toxin activity"/>
    <property type="evidence" value="ECO:0007669"/>
    <property type="project" value="UniProtKB-KW"/>
</dbReference>
<dbReference type="GO" id="GO:0001935">
    <property type="term" value="P:endothelial cell proliferation"/>
    <property type="evidence" value="ECO:0007669"/>
    <property type="project" value="TreeGrafter"/>
</dbReference>
<dbReference type="Gene3D" id="2.10.80.10">
    <property type="entry name" value="Lipase, subunit A"/>
    <property type="match status" value="1"/>
</dbReference>
<dbReference type="InterPro" id="IPR009523">
    <property type="entry name" value="Prokineticin"/>
</dbReference>
<dbReference type="InterPro" id="IPR023569">
    <property type="entry name" value="Prokineticin_domain"/>
</dbReference>
<dbReference type="PANTHER" id="PTHR18821:SF2">
    <property type="entry name" value="DICKKOPF-RELATED PROTEIN 3-LIKE"/>
    <property type="match status" value="1"/>
</dbReference>
<dbReference type="PANTHER" id="PTHR18821">
    <property type="entry name" value="PROKINETICIN"/>
    <property type="match status" value="1"/>
</dbReference>
<dbReference type="Pfam" id="PF06607">
    <property type="entry name" value="Prokineticin"/>
    <property type="match status" value="1"/>
</dbReference>
<dbReference type="SUPFAM" id="SSF57190">
    <property type="entry name" value="Colipase-like"/>
    <property type="match status" value="2"/>
</dbReference>
<accession>Q8JFY2</accession>
<proteinExistence type="evidence at transcript level"/>
<name>BM8B_BOMMX</name>
<sequence length="96" mass="10186">MKCFAQIVVLLLVIAFSHGAVITGVRDRDAQCGSGTCCAASAFSRNIRFCVPLGNNGEECHPASHKVPYNGKRLSSLCPCNTGLTCSKSGEKYQCS</sequence>
<organism>
    <name type="scientific">Bombina maxima</name>
    <name type="common">Giant fire-bellied toad</name>
    <name type="synonym">Chinese red belly toad</name>
    <dbReference type="NCBI Taxonomy" id="161274"/>
    <lineage>
        <taxon>Eukaryota</taxon>
        <taxon>Metazoa</taxon>
        <taxon>Chordata</taxon>
        <taxon>Craniata</taxon>
        <taxon>Vertebrata</taxon>
        <taxon>Euteleostomi</taxon>
        <taxon>Amphibia</taxon>
        <taxon>Batrachia</taxon>
        <taxon>Anura</taxon>
        <taxon>Bombinatoridae</taxon>
        <taxon>Bombina</taxon>
    </lineage>
</organism>
<keyword id="KW-1015">Disulfide bond</keyword>
<keyword id="KW-1213">G-protein coupled receptor impairing toxin</keyword>
<keyword id="KW-0964">Secreted</keyword>
<keyword id="KW-0732">Signal</keyword>
<keyword id="KW-0800">Toxin</keyword>
<comment type="function">
    <text evidence="1">Potent agonist for both PKR1/PROKR1 and PKR2/PROKR2, and inducer of a potent and long-lasting hyperalgesia. Also potentiates capsaicin-induced TRPV1 current, when tested on DRG neurons. At subnanomolar concentrations, this protein both induces potent chemotaxis of macrophages and stimulates LPS-induced production of the pro-inflammatory cytokines IL-1 and IL-12. In vivo, potently stimulates the contraction of the guinea-pig gastrointestinal (GI) smooth muscle (nanomolar concentration).</text>
</comment>
<comment type="subcellular location">
    <subcellularLocation>
        <location>Secreted</location>
    </subcellularLocation>
</comment>
<comment type="tissue specificity">
    <text>Expressed by the skin glands.</text>
</comment>
<comment type="similarity">
    <text evidence="2">Belongs to the AVIT (prokineticin) family.</text>
</comment>
<evidence type="ECO:0000250" key="1">
    <source>
        <dbReference type="UniProtKB" id="Q9PW66"/>
    </source>
</evidence>
<evidence type="ECO:0000305" key="2"/>
<reference key="1">
    <citation type="journal article" date="2003" name="Biochem. J.">
        <title>Granular gland transcriptomes in stimulated amphibian skin secretions.</title>
        <authorList>
            <person name="Chen T."/>
            <person name="Farragher S.M."/>
            <person name="Bjourson A.J."/>
            <person name="Orr D.F."/>
            <person name="Rao P."/>
            <person name="Shaw C."/>
        </authorList>
    </citation>
    <scope>NUCLEOTIDE SEQUENCE [MRNA]</scope>
    <source>
        <tissue>Skin secretion</tissue>
    </source>
</reference>